<feature type="chain" id="PRO_0000370199" description="Probable peptide export permease protein YydJ">
    <location>
        <begin position="1"/>
        <end position="240"/>
    </location>
</feature>
<feature type="transmembrane region" description="Helical" evidence="1">
    <location>
        <begin position="13"/>
        <end position="33"/>
    </location>
</feature>
<feature type="transmembrane region" description="Helical" evidence="1">
    <location>
        <begin position="50"/>
        <end position="70"/>
    </location>
</feature>
<feature type="transmembrane region" description="Helical" evidence="1">
    <location>
        <begin position="97"/>
        <end position="117"/>
    </location>
</feature>
<feature type="transmembrane region" description="Helical" evidence="1">
    <location>
        <begin position="126"/>
        <end position="146"/>
    </location>
</feature>
<feature type="transmembrane region" description="Helical" evidence="1">
    <location>
        <begin position="153"/>
        <end position="173"/>
    </location>
</feature>
<feature type="transmembrane region" description="Helical" evidence="1">
    <location>
        <begin position="210"/>
        <end position="230"/>
    </location>
</feature>
<protein>
    <recommendedName>
        <fullName>Probable peptide export permease protein YydJ</fullName>
    </recommendedName>
</protein>
<comment type="function">
    <text evidence="4">Suggested to be part of an ABC transporter complex YydIJ involved in export of the modified peptide YydF.</text>
</comment>
<comment type="subunit">
    <text evidence="4">The complex is composed of 2 ATP-binding proteins (YydI), two transmembrane proteins (YydJ).</text>
</comment>
<comment type="subcellular location">
    <subcellularLocation>
        <location evidence="4">Cell membrane</location>
        <topology evidence="4">Multi-pass membrane protein</topology>
    </subcellularLocation>
</comment>
<comment type="induction">
    <text evidence="2 3">Transcriptionally repressed by rok (PubMed:15743949), this was not found to be the case in another study (PubMed:17921301).</text>
</comment>
<comment type="disruption phenotype">
    <text evidence="3">Up-regulates expression of the LiaRS two-component regulatory system; this effect is more pronounced on modified competence medium than on rich or sporulation medium.</text>
</comment>
<dbReference type="EMBL" id="D78193">
    <property type="protein sequence ID" value="BAA11272.1"/>
    <property type="molecule type" value="Genomic_DNA"/>
</dbReference>
<dbReference type="EMBL" id="AL009126">
    <property type="protein sequence ID" value="CAB16051.1"/>
    <property type="molecule type" value="Genomic_DNA"/>
</dbReference>
<dbReference type="PIR" id="H70091">
    <property type="entry name" value="H70091"/>
</dbReference>
<dbReference type="RefSeq" id="WP_003243760.1">
    <property type="nucleotide sequence ID" value="NZ_OZ025638.1"/>
</dbReference>
<dbReference type="SMR" id="Q45592"/>
<dbReference type="FunCoup" id="Q45592">
    <property type="interactions" value="151"/>
</dbReference>
<dbReference type="STRING" id="224308.BSU40140"/>
<dbReference type="TCDB" id="3.A.1.133.1">
    <property type="family name" value="the atp-binding cassette (abc) superfamily"/>
</dbReference>
<dbReference type="PaxDb" id="224308-BSU40140"/>
<dbReference type="EnsemblBacteria" id="CAB16051">
    <property type="protein sequence ID" value="CAB16051"/>
    <property type="gene ID" value="BSU_40140"/>
</dbReference>
<dbReference type="GeneID" id="937730"/>
<dbReference type="KEGG" id="bsu:BSU40140"/>
<dbReference type="PATRIC" id="fig|224308.179.peg.4342"/>
<dbReference type="eggNOG" id="ENOG5033PQ0">
    <property type="taxonomic scope" value="Bacteria"/>
</dbReference>
<dbReference type="InParanoid" id="Q45592"/>
<dbReference type="OrthoDB" id="2232193at2"/>
<dbReference type="BioCyc" id="BSUB:BSU40140-MONOMER"/>
<dbReference type="Proteomes" id="UP000001570">
    <property type="component" value="Chromosome"/>
</dbReference>
<dbReference type="GO" id="GO:0005886">
    <property type="term" value="C:plasma membrane"/>
    <property type="evidence" value="ECO:0007669"/>
    <property type="project" value="UniProtKB-SubCell"/>
</dbReference>
<evidence type="ECO:0000255" key="1"/>
<evidence type="ECO:0000269" key="2">
    <source>
    </source>
</evidence>
<evidence type="ECO:0000269" key="3">
    <source>
    </source>
</evidence>
<evidence type="ECO:0000305" key="4"/>
<sequence>MKLEFKKSISNKVIIILGAMFVFLFLLGYFLLVGIDKVSNVTPEMFFFSSYTVATQFGLMLFSFVIAFFINREYSNKNILFYKLIGENIYTFFYKKIAVLFLECFAFITLGLLIISLMYHDFSHFALLLFLFSAVILQYILIIGTISVLCPNILISIGVSIVYWMTSVILVAISNKTFGFIAPFEAGNTMYPRIERVLQSDNMTLGSNDVLFIILYLVSIIIINAIVLRFSKTRWIKMGL</sequence>
<organism>
    <name type="scientific">Bacillus subtilis (strain 168)</name>
    <dbReference type="NCBI Taxonomy" id="224308"/>
    <lineage>
        <taxon>Bacteria</taxon>
        <taxon>Bacillati</taxon>
        <taxon>Bacillota</taxon>
        <taxon>Bacilli</taxon>
        <taxon>Bacillales</taxon>
        <taxon>Bacillaceae</taxon>
        <taxon>Bacillus</taxon>
    </lineage>
</organism>
<accession>Q45592</accession>
<accession>Q794X3</accession>
<name>YYDJ_BACSU</name>
<gene>
    <name type="primary">yydJ</name>
    <name type="ordered locus">BSU40140</name>
</gene>
<proteinExistence type="evidence at transcript level"/>
<reference key="1">
    <citation type="journal article" date="1997" name="DNA Res.">
        <title>Sequence analysis of the 36-kb region between gntZ and trnY genes of Bacillus subtilis genome.</title>
        <authorList>
            <person name="Kasahara Y."/>
            <person name="Nakai S."/>
            <person name="Ogasawara N."/>
        </authorList>
    </citation>
    <scope>NUCLEOTIDE SEQUENCE [GENOMIC DNA]</scope>
    <source>
        <strain>168</strain>
    </source>
</reference>
<reference key="2">
    <citation type="journal article" date="1997" name="Nature">
        <title>The complete genome sequence of the Gram-positive bacterium Bacillus subtilis.</title>
        <authorList>
            <person name="Kunst F."/>
            <person name="Ogasawara N."/>
            <person name="Moszer I."/>
            <person name="Albertini A.M."/>
            <person name="Alloni G."/>
            <person name="Azevedo V."/>
            <person name="Bertero M.G."/>
            <person name="Bessieres P."/>
            <person name="Bolotin A."/>
            <person name="Borchert S."/>
            <person name="Borriss R."/>
            <person name="Boursier L."/>
            <person name="Brans A."/>
            <person name="Braun M."/>
            <person name="Brignell S.C."/>
            <person name="Bron S."/>
            <person name="Brouillet S."/>
            <person name="Bruschi C.V."/>
            <person name="Caldwell B."/>
            <person name="Capuano V."/>
            <person name="Carter N.M."/>
            <person name="Choi S.-K."/>
            <person name="Codani J.-J."/>
            <person name="Connerton I.F."/>
            <person name="Cummings N.J."/>
            <person name="Daniel R.A."/>
            <person name="Denizot F."/>
            <person name="Devine K.M."/>
            <person name="Duesterhoeft A."/>
            <person name="Ehrlich S.D."/>
            <person name="Emmerson P.T."/>
            <person name="Entian K.-D."/>
            <person name="Errington J."/>
            <person name="Fabret C."/>
            <person name="Ferrari E."/>
            <person name="Foulger D."/>
            <person name="Fritz C."/>
            <person name="Fujita M."/>
            <person name="Fujita Y."/>
            <person name="Fuma S."/>
            <person name="Galizzi A."/>
            <person name="Galleron N."/>
            <person name="Ghim S.-Y."/>
            <person name="Glaser P."/>
            <person name="Goffeau A."/>
            <person name="Golightly E.J."/>
            <person name="Grandi G."/>
            <person name="Guiseppi G."/>
            <person name="Guy B.J."/>
            <person name="Haga K."/>
            <person name="Haiech J."/>
            <person name="Harwood C.R."/>
            <person name="Henaut A."/>
            <person name="Hilbert H."/>
            <person name="Holsappel S."/>
            <person name="Hosono S."/>
            <person name="Hullo M.-F."/>
            <person name="Itaya M."/>
            <person name="Jones L.-M."/>
            <person name="Joris B."/>
            <person name="Karamata D."/>
            <person name="Kasahara Y."/>
            <person name="Klaerr-Blanchard M."/>
            <person name="Klein C."/>
            <person name="Kobayashi Y."/>
            <person name="Koetter P."/>
            <person name="Koningstein G."/>
            <person name="Krogh S."/>
            <person name="Kumano M."/>
            <person name="Kurita K."/>
            <person name="Lapidus A."/>
            <person name="Lardinois S."/>
            <person name="Lauber J."/>
            <person name="Lazarevic V."/>
            <person name="Lee S.-M."/>
            <person name="Levine A."/>
            <person name="Liu H."/>
            <person name="Masuda S."/>
            <person name="Mauel C."/>
            <person name="Medigue C."/>
            <person name="Medina N."/>
            <person name="Mellado R.P."/>
            <person name="Mizuno M."/>
            <person name="Moestl D."/>
            <person name="Nakai S."/>
            <person name="Noback M."/>
            <person name="Noone D."/>
            <person name="O'Reilly M."/>
            <person name="Ogawa K."/>
            <person name="Ogiwara A."/>
            <person name="Oudega B."/>
            <person name="Park S.-H."/>
            <person name="Parro V."/>
            <person name="Pohl T.M."/>
            <person name="Portetelle D."/>
            <person name="Porwollik S."/>
            <person name="Prescott A.M."/>
            <person name="Presecan E."/>
            <person name="Pujic P."/>
            <person name="Purnelle B."/>
            <person name="Rapoport G."/>
            <person name="Rey M."/>
            <person name="Reynolds S."/>
            <person name="Rieger M."/>
            <person name="Rivolta C."/>
            <person name="Rocha E."/>
            <person name="Roche B."/>
            <person name="Rose M."/>
            <person name="Sadaie Y."/>
            <person name="Sato T."/>
            <person name="Scanlan E."/>
            <person name="Schleich S."/>
            <person name="Schroeter R."/>
            <person name="Scoffone F."/>
            <person name="Sekiguchi J."/>
            <person name="Sekowska A."/>
            <person name="Seror S.J."/>
            <person name="Serror P."/>
            <person name="Shin B.-S."/>
            <person name="Soldo B."/>
            <person name="Sorokin A."/>
            <person name="Tacconi E."/>
            <person name="Takagi T."/>
            <person name="Takahashi H."/>
            <person name="Takemaru K."/>
            <person name="Takeuchi M."/>
            <person name="Tamakoshi A."/>
            <person name="Tanaka T."/>
            <person name="Terpstra P."/>
            <person name="Tognoni A."/>
            <person name="Tosato V."/>
            <person name="Uchiyama S."/>
            <person name="Vandenbol M."/>
            <person name="Vannier F."/>
            <person name="Vassarotti A."/>
            <person name="Viari A."/>
            <person name="Wambutt R."/>
            <person name="Wedler E."/>
            <person name="Wedler H."/>
            <person name="Weitzenegger T."/>
            <person name="Winters P."/>
            <person name="Wipat A."/>
            <person name="Yamamoto H."/>
            <person name="Yamane K."/>
            <person name="Yasumoto K."/>
            <person name="Yata K."/>
            <person name="Yoshida K."/>
            <person name="Yoshikawa H.-F."/>
            <person name="Zumstein E."/>
            <person name="Yoshikawa H."/>
            <person name="Danchin A."/>
        </authorList>
    </citation>
    <scope>NUCLEOTIDE SEQUENCE [LARGE SCALE GENOMIC DNA]</scope>
    <source>
        <strain>168</strain>
    </source>
</reference>
<reference key="3">
    <citation type="journal article" date="2005" name="J. Bacteriol.">
        <title>The Rok protein of Bacillus subtilis represses genes for cell surface and extracellular functions.</title>
        <authorList>
            <person name="Albano M."/>
            <person name="Smits W.K."/>
            <person name="Ho L.T."/>
            <person name="Kraigher B."/>
            <person name="Mandic-Mulec I."/>
            <person name="Kuipers O.P."/>
            <person name="Dubnau D."/>
        </authorList>
    </citation>
    <scope>TRANSCRIPTION REGULATION</scope>
    <scope>OPERON SUGGESTION</scope>
    <source>
        <strain>168</strain>
    </source>
</reference>
<reference key="4">
    <citation type="journal article" date="2007" name="J. Bacteriol.">
        <title>The yydFGHIJ operon of Bacillus subtilis encodes a peptide that induces the LiaRS two-component system.</title>
        <authorList>
            <person name="Butcher B.G."/>
            <person name="Lin Y.-P."/>
            <person name="Helmann J.D."/>
        </authorList>
    </citation>
    <scope>SUGGESTION OF FUNCTION</scope>
    <scope>OPERON STRUCTURE</scope>
    <scope>DISRUPTION PHENOTYPE</scope>
    <source>
        <strain>168</strain>
    </source>
</reference>
<keyword id="KW-1003">Cell membrane</keyword>
<keyword id="KW-0472">Membrane</keyword>
<keyword id="KW-1185">Reference proteome</keyword>
<keyword id="KW-0812">Transmembrane</keyword>
<keyword id="KW-1133">Transmembrane helix</keyword>